<accession>P9WJM2</accession>
<accession>L0T5N1</accession>
<accession>P67656</accession>
<accession>Q10889</accession>
<proteinExistence type="inferred from homology"/>
<keyword id="KW-0028">Amino-acid biosynthesis</keyword>
<keyword id="KW-0378">Hydrolase</keyword>
<keyword id="KW-0486">Methionine biosynthesis</keyword>
<keyword id="KW-1185">Reference proteome</keyword>
<protein>
    <recommendedName>
        <fullName evidence="1">5'-methylthioadenosine/S-adenosylhomocysteine nucleosidase</fullName>
        <shortName evidence="1">MTA/SAH nucleosidase</shortName>
        <shortName evidence="1">MTAN</shortName>
        <ecNumber evidence="1">3.2.2.9</ecNumber>
    </recommendedName>
    <alternativeName>
        <fullName evidence="1">5'-deoxyadenosine nucleosidase</fullName>
        <shortName evidence="1">DOA nucleosidase</shortName>
        <shortName evidence="1">dAdo nucleosidase</shortName>
    </alternativeName>
    <alternativeName>
        <fullName evidence="1">5'-methylthioadenosine nucleosidase</fullName>
        <shortName evidence="1">MTA nucleosidase</shortName>
    </alternativeName>
    <alternativeName>
        <fullName evidence="1">S-adenosylhomocysteine nucleosidase</fullName>
        <shortName evidence="1">AdoHcy nucleosidase</shortName>
        <shortName evidence="1">SAH nucleosidase</shortName>
        <shortName evidence="1">SRH nucleosidase</shortName>
    </alternativeName>
</protein>
<comment type="function">
    <text evidence="1">Catalyzes the irreversible cleavage of the glycosidic bond in both 5'-methylthioadenosine (MTA) and S-adenosylhomocysteine (SAH/AdoHcy) to adenine and the corresponding thioribose, 5'-methylthioribose and S-ribosylhomocysteine, respectively. Also cleaves 5'-deoxyadenosine, a toxic by-product of radical S-adenosylmethionine (SAM) enzymes, into 5-deoxyribose and adenine.</text>
</comment>
<comment type="catalytic activity">
    <reaction evidence="1">
        <text>S-adenosyl-L-homocysteine + H2O = S-(5-deoxy-D-ribos-5-yl)-L-homocysteine + adenine</text>
        <dbReference type="Rhea" id="RHEA:17805"/>
        <dbReference type="ChEBI" id="CHEBI:15377"/>
        <dbReference type="ChEBI" id="CHEBI:16708"/>
        <dbReference type="ChEBI" id="CHEBI:57856"/>
        <dbReference type="ChEBI" id="CHEBI:58195"/>
        <dbReference type="EC" id="3.2.2.9"/>
    </reaction>
</comment>
<comment type="catalytic activity">
    <reaction evidence="1">
        <text>S-methyl-5'-thioadenosine + H2O = 5-(methylsulfanyl)-D-ribose + adenine</text>
        <dbReference type="Rhea" id="RHEA:13617"/>
        <dbReference type="ChEBI" id="CHEBI:15377"/>
        <dbReference type="ChEBI" id="CHEBI:16708"/>
        <dbReference type="ChEBI" id="CHEBI:17509"/>
        <dbReference type="ChEBI" id="CHEBI:78440"/>
        <dbReference type="EC" id="3.2.2.9"/>
    </reaction>
</comment>
<comment type="catalytic activity">
    <reaction evidence="1">
        <text>5'-deoxyadenosine + H2O = 5-deoxy-D-ribose + adenine</text>
        <dbReference type="Rhea" id="RHEA:29859"/>
        <dbReference type="ChEBI" id="CHEBI:15377"/>
        <dbReference type="ChEBI" id="CHEBI:16708"/>
        <dbReference type="ChEBI" id="CHEBI:17319"/>
        <dbReference type="ChEBI" id="CHEBI:149540"/>
        <dbReference type="EC" id="3.2.2.9"/>
    </reaction>
    <physiologicalReaction direction="left-to-right" evidence="1">
        <dbReference type="Rhea" id="RHEA:29860"/>
    </physiologicalReaction>
</comment>
<comment type="pathway">
    <text evidence="1">Amino-acid biosynthesis; L-methionine biosynthesis via salvage pathway; S-methyl-5-thio-alpha-D-ribose 1-phosphate from S-methyl-5'-thioadenosine (hydrolase route): step 1/2.</text>
</comment>
<comment type="similarity">
    <text evidence="2">Belongs to the PNP/UDP phosphorylase family. MtnN subfamily.</text>
</comment>
<organism>
    <name type="scientific">Mycobacterium tuberculosis (strain CDC 1551 / Oshkosh)</name>
    <dbReference type="NCBI Taxonomy" id="83331"/>
    <lineage>
        <taxon>Bacteria</taxon>
        <taxon>Bacillati</taxon>
        <taxon>Actinomycetota</taxon>
        <taxon>Actinomycetes</taxon>
        <taxon>Mycobacteriales</taxon>
        <taxon>Mycobacteriaceae</taxon>
        <taxon>Mycobacterium</taxon>
        <taxon>Mycobacterium tuberculosis complex</taxon>
    </lineage>
</organism>
<dbReference type="EC" id="3.2.2.9" evidence="1"/>
<dbReference type="EMBL" id="AE000516">
    <property type="protein sequence ID" value="AAK44323.1"/>
    <property type="molecule type" value="Genomic_DNA"/>
</dbReference>
<dbReference type="PIR" id="C70750">
    <property type="entry name" value="C70750"/>
</dbReference>
<dbReference type="RefSeq" id="WP_003400678.1">
    <property type="nucleotide sequence ID" value="NZ_KK341227.1"/>
</dbReference>
<dbReference type="SMR" id="P9WJM2"/>
<dbReference type="KEGG" id="mtc:MT0100"/>
<dbReference type="PATRIC" id="fig|83331.31.peg.105"/>
<dbReference type="HOGENOM" id="CLU_031248_2_0_11"/>
<dbReference type="UniPathway" id="UPA00904">
    <property type="reaction ID" value="UER00871"/>
</dbReference>
<dbReference type="Proteomes" id="UP000001020">
    <property type="component" value="Chromosome"/>
</dbReference>
<dbReference type="GO" id="GO:0005829">
    <property type="term" value="C:cytosol"/>
    <property type="evidence" value="ECO:0007669"/>
    <property type="project" value="TreeGrafter"/>
</dbReference>
<dbReference type="GO" id="GO:0008782">
    <property type="term" value="F:adenosylhomocysteine nucleosidase activity"/>
    <property type="evidence" value="ECO:0007669"/>
    <property type="project" value="UniProtKB-EC"/>
</dbReference>
<dbReference type="GO" id="GO:0008930">
    <property type="term" value="F:methylthioadenosine nucleosidase activity"/>
    <property type="evidence" value="ECO:0007669"/>
    <property type="project" value="RHEA"/>
</dbReference>
<dbReference type="GO" id="GO:0019509">
    <property type="term" value="P:L-methionine salvage from methylthioadenosine"/>
    <property type="evidence" value="ECO:0007669"/>
    <property type="project" value="UniProtKB-UniPathway"/>
</dbReference>
<dbReference type="GO" id="GO:0019284">
    <property type="term" value="P:L-methionine salvage from S-adenosylmethionine"/>
    <property type="evidence" value="ECO:0007669"/>
    <property type="project" value="TreeGrafter"/>
</dbReference>
<dbReference type="GO" id="GO:0009116">
    <property type="term" value="P:nucleoside metabolic process"/>
    <property type="evidence" value="ECO:0007669"/>
    <property type="project" value="InterPro"/>
</dbReference>
<dbReference type="CDD" id="cd09008">
    <property type="entry name" value="MTAN"/>
    <property type="match status" value="1"/>
</dbReference>
<dbReference type="Gene3D" id="3.40.50.1580">
    <property type="entry name" value="Nucleoside phosphorylase domain"/>
    <property type="match status" value="1"/>
</dbReference>
<dbReference type="InterPro" id="IPR000845">
    <property type="entry name" value="Nucleoside_phosphorylase_d"/>
</dbReference>
<dbReference type="InterPro" id="IPR035994">
    <property type="entry name" value="Nucleoside_phosphorylase_sf"/>
</dbReference>
<dbReference type="NCBIfam" id="NF004079">
    <property type="entry name" value="PRK05584.1"/>
    <property type="match status" value="1"/>
</dbReference>
<dbReference type="PANTHER" id="PTHR46832">
    <property type="entry name" value="5'-METHYLTHIOADENOSINE/S-ADENOSYLHOMOCYSTEINE NUCLEOSIDASE"/>
    <property type="match status" value="1"/>
</dbReference>
<dbReference type="PANTHER" id="PTHR46832:SF1">
    <property type="entry name" value="5'-METHYLTHIOADENOSINE_S-ADENOSYLHOMOCYSTEINE NUCLEOSIDASE"/>
    <property type="match status" value="1"/>
</dbReference>
<dbReference type="Pfam" id="PF01048">
    <property type="entry name" value="PNP_UDP_1"/>
    <property type="match status" value="1"/>
</dbReference>
<dbReference type="SUPFAM" id="SSF53167">
    <property type="entry name" value="Purine and uridine phosphorylases"/>
    <property type="match status" value="1"/>
</dbReference>
<reference key="1">
    <citation type="journal article" date="2002" name="J. Bacteriol.">
        <title>Whole-genome comparison of Mycobacterium tuberculosis clinical and laboratory strains.</title>
        <authorList>
            <person name="Fleischmann R.D."/>
            <person name="Alland D."/>
            <person name="Eisen J.A."/>
            <person name="Carpenter L."/>
            <person name="White O."/>
            <person name="Peterson J.D."/>
            <person name="DeBoy R.T."/>
            <person name="Dodson R.J."/>
            <person name="Gwinn M.L."/>
            <person name="Haft D.H."/>
            <person name="Hickey E.K."/>
            <person name="Kolonay J.F."/>
            <person name="Nelson W.C."/>
            <person name="Umayam L.A."/>
            <person name="Ermolaeva M.D."/>
            <person name="Salzberg S.L."/>
            <person name="Delcher A."/>
            <person name="Utterback T.R."/>
            <person name="Weidman J.F."/>
            <person name="Khouri H.M."/>
            <person name="Gill J."/>
            <person name="Mikula A."/>
            <person name="Bishai W."/>
            <person name="Jacobs W.R. Jr."/>
            <person name="Venter J.C."/>
            <person name="Fraser C.M."/>
        </authorList>
    </citation>
    <scope>NUCLEOTIDE SEQUENCE [LARGE SCALE GENOMIC DNA]</scope>
    <source>
        <strain>CDC 1551 / Oshkosh</strain>
    </source>
</reference>
<name>MTNN_MYCTO</name>
<gene>
    <name type="primary">mtnN</name>
    <name type="synonym">mtn</name>
    <name type="ordered locus">MT0100</name>
</gene>
<evidence type="ECO:0000250" key="1">
    <source>
        <dbReference type="UniProtKB" id="P0AF12"/>
    </source>
</evidence>
<evidence type="ECO:0000305" key="2"/>
<feature type="chain" id="PRO_0000427805" description="5'-methylthioadenosine/S-adenosylhomocysteine nucleosidase">
    <location>
        <begin position="1"/>
        <end position="255"/>
    </location>
</feature>
<feature type="active site" description="Proton acceptor" evidence="1">
    <location>
        <position position="14"/>
    </location>
</feature>
<feature type="active site" description="Proton donor" evidence="1">
    <location>
        <position position="220"/>
    </location>
</feature>
<feature type="binding site" evidence="1">
    <location>
        <position position="80"/>
    </location>
    <ligand>
        <name>substrate</name>
    </ligand>
</feature>
<feature type="binding site" evidence="1">
    <location>
        <position position="176"/>
    </location>
    <ligand>
        <name>substrate</name>
    </ligand>
</feature>
<feature type="binding site" evidence="1">
    <location>
        <begin position="196"/>
        <end position="197"/>
    </location>
    <ligand>
        <name>substrate</name>
    </ligand>
</feature>
<sequence>MAVTVGVICAIPQELAYLRGVLVDAKRQQVAQILFDSGQLDAHRVVLAAAGMGKVNTGLTATLLADRFGCRTIVFTGVAGGLDPELCIGDIVIADRVVQHDFGLLTDERLRPYQPGHIPFIEPTERLGYPVDPAVIDRVKHRLDGFTLAPLSTAAGGGGRQPRIYYGTILTGDQYLHCERTRNRLHHELGGMAVEMEGGAVAQICASFDIPWLVIRALSDLAGADSGVDFNRFVGEVAASSARVLLRLLPVLTAC</sequence>